<gene>
    <name evidence="1" type="primary">gltX</name>
    <name type="ordered locus">USA300HOU_0521</name>
</gene>
<accession>A8YZM5</accession>
<dbReference type="EC" id="6.1.1.17" evidence="1"/>
<dbReference type="EMBL" id="CP000730">
    <property type="protein sequence ID" value="ABX28547.1"/>
    <property type="molecule type" value="Genomic_DNA"/>
</dbReference>
<dbReference type="RefSeq" id="WP_001283792.1">
    <property type="nucleotide sequence ID" value="NC_010079.1"/>
</dbReference>
<dbReference type="SMR" id="A8YZM5"/>
<dbReference type="KEGG" id="sax:USA300HOU_0521"/>
<dbReference type="HOGENOM" id="CLU_015768_6_1_9"/>
<dbReference type="GO" id="GO:0005829">
    <property type="term" value="C:cytosol"/>
    <property type="evidence" value="ECO:0007669"/>
    <property type="project" value="TreeGrafter"/>
</dbReference>
<dbReference type="GO" id="GO:0005524">
    <property type="term" value="F:ATP binding"/>
    <property type="evidence" value="ECO:0007669"/>
    <property type="project" value="UniProtKB-UniRule"/>
</dbReference>
<dbReference type="GO" id="GO:0004818">
    <property type="term" value="F:glutamate-tRNA ligase activity"/>
    <property type="evidence" value="ECO:0007669"/>
    <property type="project" value="UniProtKB-UniRule"/>
</dbReference>
<dbReference type="GO" id="GO:0000049">
    <property type="term" value="F:tRNA binding"/>
    <property type="evidence" value="ECO:0007669"/>
    <property type="project" value="InterPro"/>
</dbReference>
<dbReference type="GO" id="GO:0008270">
    <property type="term" value="F:zinc ion binding"/>
    <property type="evidence" value="ECO:0007669"/>
    <property type="project" value="InterPro"/>
</dbReference>
<dbReference type="GO" id="GO:0006424">
    <property type="term" value="P:glutamyl-tRNA aminoacylation"/>
    <property type="evidence" value="ECO:0007669"/>
    <property type="project" value="UniProtKB-UniRule"/>
</dbReference>
<dbReference type="CDD" id="cd00808">
    <property type="entry name" value="GluRS_core"/>
    <property type="match status" value="1"/>
</dbReference>
<dbReference type="FunFam" id="1.10.10.350:FF:000002">
    <property type="entry name" value="Glutamate--tRNA ligase"/>
    <property type="match status" value="1"/>
</dbReference>
<dbReference type="FunFam" id="3.40.50.620:FF:000007">
    <property type="entry name" value="Glutamate--tRNA ligase"/>
    <property type="match status" value="1"/>
</dbReference>
<dbReference type="Gene3D" id="1.10.10.350">
    <property type="match status" value="1"/>
</dbReference>
<dbReference type="Gene3D" id="3.40.50.620">
    <property type="entry name" value="HUPs"/>
    <property type="match status" value="1"/>
</dbReference>
<dbReference type="HAMAP" id="MF_00022">
    <property type="entry name" value="Glu_tRNA_synth_type1"/>
    <property type="match status" value="1"/>
</dbReference>
<dbReference type="InterPro" id="IPR045462">
    <property type="entry name" value="aa-tRNA-synth_I_cd-bd"/>
</dbReference>
<dbReference type="InterPro" id="IPR020751">
    <property type="entry name" value="aa-tRNA-synth_I_codon-bd_sub2"/>
</dbReference>
<dbReference type="InterPro" id="IPR001412">
    <property type="entry name" value="aa-tRNA-synth_I_CS"/>
</dbReference>
<dbReference type="InterPro" id="IPR008925">
    <property type="entry name" value="aa_tRNA-synth_I_cd-bd_sf"/>
</dbReference>
<dbReference type="InterPro" id="IPR004527">
    <property type="entry name" value="Glu-tRNA-ligase_bac/mito"/>
</dbReference>
<dbReference type="InterPro" id="IPR000924">
    <property type="entry name" value="Glu/Gln-tRNA-synth"/>
</dbReference>
<dbReference type="InterPro" id="IPR020058">
    <property type="entry name" value="Glu/Gln-tRNA-synth_Ib_cat-dom"/>
</dbReference>
<dbReference type="InterPro" id="IPR049940">
    <property type="entry name" value="GluQ/Sye"/>
</dbReference>
<dbReference type="InterPro" id="IPR033910">
    <property type="entry name" value="GluRS_core"/>
</dbReference>
<dbReference type="InterPro" id="IPR014729">
    <property type="entry name" value="Rossmann-like_a/b/a_fold"/>
</dbReference>
<dbReference type="NCBIfam" id="TIGR00464">
    <property type="entry name" value="gltX_bact"/>
    <property type="match status" value="1"/>
</dbReference>
<dbReference type="PANTHER" id="PTHR43311">
    <property type="entry name" value="GLUTAMATE--TRNA LIGASE"/>
    <property type="match status" value="1"/>
</dbReference>
<dbReference type="PANTHER" id="PTHR43311:SF2">
    <property type="entry name" value="GLUTAMATE--TRNA LIGASE, MITOCHONDRIAL-RELATED"/>
    <property type="match status" value="1"/>
</dbReference>
<dbReference type="Pfam" id="PF19269">
    <property type="entry name" value="Anticodon_2"/>
    <property type="match status" value="1"/>
</dbReference>
<dbReference type="Pfam" id="PF00749">
    <property type="entry name" value="tRNA-synt_1c"/>
    <property type="match status" value="1"/>
</dbReference>
<dbReference type="PRINTS" id="PR00987">
    <property type="entry name" value="TRNASYNTHGLU"/>
</dbReference>
<dbReference type="SUPFAM" id="SSF48163">
    <property type="entry name" value="An anticodon-binding domain of class I aminoacyl-tRNA synthetases"/>
    <property type="match status" value="1"/>
</dbReference>
<dbReference type="SUPFAM" id="SSF52374">
    <property type="entry name" value="Nucleotidylyl transferase"/>
    <property type="match status" value="1"/>
</dbReference>
<dbReference type="PROSITE" id="PS00178">
    <property type="entry name" value="AA_TRNA_LIGASE_I"/>
    <property type="match status" value="1"/>
</dbReference>
<keyword id="KW-0030">Aminoacyl-tRNA synthetase</keyword>
<keyword id="KW-0067">ATP-binding</keyword>
<keyword id="KW-0963">Cytoplasm</keyword>
<keyword id="KW-0436">Ligase</keyword>
<keyword id="KW-0547">Nucleotide-binding</keyword>
<keyword id="KW-0648">Protein biosynthesis</keyword>
<feature type="chain" id="PRO_1000074338" description="Glutamate--tRNA ligase">
    <location>
        <begin position="1"/>
        <end position="484"/>
    </location>
</feature>
<feature type="short sequence motif" description="'HIGH' region" evidence="1">
    <location>
        <begin position="11"/>
        <end position="21"/>
    </location>
</feature>
<feature type="short sequence motif" description="'KMSKS' region" evidence="1">
    <location>
        <begin position="252"/>
        <end position="256"/>
    </location>
</feature>
<feature type="binding site" evidence="1">
    <location>
        <position position="255"/>
    </location>
    <ligand>
        <name>ATP</name>
        <dbReference type="ChEBI" id="CHEBI:30616"/>
    </ligand>
</feature>
<protein>
    <recommendedName>
        <fullName evidence="1">Glutamate--tRNA ligase</fullName>
        <ecNumber evidence="1">6.1.1.17</ecNumber>
    </recommendedName>
    <alternativeName>
        <fullName evidence="1">Glutamyl-tRNA synthetase</fullName>
        <shortName evidence="1">GluRS</shortName>
    </alternativeName>
</protein>
<reference key="1">
    <citation type="journal article" date="2007" name="BMC Microbiol.">
        <title>Subtle genetic changes enhance virulence of methicillin resistant and sensitive Staphylococcus aureus.</title>
        <authorList>
            <person name="Highlander S.K."/>
            <person name="Hulten K.G."/>
            <person name="Qin X."/>
            <person name="Jiang H."/>
            <person name="Yerrapragada S."/>
            <person name="Mason E.O. Jr."/>
            <person name="Shang Y."/>
            <person name="Williams T.M."/>
            <person name="Fortunov R.M."/>
            <person name="Liu Y."/>
            <person name="Igboeli O."/>
            <person name="Petrosino J."/>
            <person name="Tirumalai M."/>
            <person name="Uzman A."/>
            <person name="Fox G.E."/>
            <person name="Cardenas A.M."/>
            <person name="Muzny D.M."/>
            <person name="Hemphill L."/>
            <person name="Ding Y."/>
            <person name="Dugan S."/>
            <person name="Blyth P.R."/>
            <person name="Buhay C.J."/>
            <person name="Dinh H.H."/>
            <person name="Hawes A.C."/>
            <person name="Holder M."/>
            <person name="Kovar C.L."/>
            <person name="Lee S.L."/>
            <person name="Liu W."/>
            <person name="Nazareth L.V."/>
            <person name="Wang Q."/>
            <person name="Zhou J."/>
            <person name="Kaplan S.L."/>
            <person name="Weinstock G.M."/>
        </authorList>
    </citation>
    <scope>NUCLEOTIDE SEQUENCE [LARGE SCALE GENOMIC DNA]</scope>
    <source>
        <strain>USA300 / TCH1516</strain>
    </source>
</reference>
<name>SYE_STAAT</name>
<comment type="function">
    <text evidence="1">Catalyzes the attachment of glutamate to tRNA(Glu) in a two-step reaction: glutamate is first activated by ATP to form Glu-AMP and then transferred to the acceptor end of tRNA(Glu).</text>
</comment>
<comment type="catalytic activity">
    <reaction evidence="1">
        <text>tRNA(Glu) + L-glutamate + ATP = L-glutamyl-tRNA(Glu) + AMP + diphosphate</text>
        <dbReference type="Rhea" id="RHEA:23540"/>
        <dbReference type="Rhea" id="RHEA-COMP:9663"/>
        <dbReference type="Rhea" id="RHEA-COMP:9680"/>
        <dbReference type="ChEBI" id="CHEBI:29985"/>
        <dbReference type="ChEBI" id="CHEBI:30616"/>
        <dbReference type="ChEBI" id="CHEBI:33019"/>
        <dbReference type="ChEBI" id="CHEBI:78442"/>
        <dbReference type="ChEBI" id="CHEBI:78520"/>
        <dbReference type="ChEBI" id="CHEBI:456215"/>
        <dbReference type="EC" id="6.1.1.17"/>
    </reaction>
</comment>
<comment type="subunit">
    <text evidence="1">Monomer.</text>
</comment>
<comment type="subcellular location">
    <subcellularLocation>
        <location evidence="1">Cytoplasm</location>
    </subcellularLocation>
</comment>
<comment type="similarity">
    <text evidence="1">Belongs to the class-I aminoacyl-tRNA synthetase family. Glutamate--tRNA ligase type 1 subfamily.</text>
</comment>
<organism>
    <name type="scientific">Staphylococcus aureus (strain USA300 / TCH1516)</name>
    <dbReference type="NCBI Taxonomy" id="451516"/>
    <lineage>
        <taxon>Bacteria</taxon>
        <taxon>Bacillati</taxon>
        <taxon>Bacillota</taxon>
        <taxon>Bacilli</taxon>
        <taxon>Bacillales</taxon>
        <taxon>Staphylococcaceae</taxon>
        <taxon>Staphylococcus</taxon>
    </lineage>
</organism>
<proteinExistence type="inferred from homology"/>
<evidence type="ECO:0000255" key="1">
    <source>
        <dbReference type="HAMAP-Rule" id="MF_00022"/>
    </source>
</evidence>
<sequence length="484" mass="56289">MSDRIRVRYAPSPTGYLHIGNARTALFNYLYAKHYNGDFVIRIEDTDKKRNLEDGETSQFDNLKWLGLDWDESVDKDNGYGPYRQSERQHIYQPLIDQLLAEDKAYKCYMTEEELEAEREAQIARGEMPRYGGQHAHLTEEQRQQFEAEGRQPSIRFRVPQNQTYSFDDMVKGNISFDSNGIGDWVIVKKDGIPTYNFAVAIDDHYMQISDVIRGDDHISNTPKQIMIYEAFGWEPPRFGHMSLIVNEERKKLSKRDGQILQFIEQYRDLGYLPEALFNFIALLGWSPEGEEEIFSKEEFIKIFDEKRLSKSPAFFDKQKLAWVNNQYMKQKDTETVFQLALPHLIKANLIPEVPSEEDLSWGRKLIALYQKEMSYAGEIVPLSEMFFKEMPALGEEEQQVINGEQVPELMTHLFSKLEALEPFEAAEIKKTIKEVQKETGIKGKQLFMPIRVAVTGQMHGPELPNTIEVLGKEKVLNRLKQYK</sequence>